<sequence length="652" mass="72150">MCGLLAFVAAPAGAAGPEGADAASAIARASHLMRHRGPDESGTWHAVDGASGGVVFGFNRLSIIDIAHSHQPLRWGPPEAPDRYVLVFNGEIYNYLELRDELRTQHGAVFATDGDGEAILAGYHHWGTEVLQRLRGMFAFALWDTVTRELFCARDPFGIKPLFIATGAGGTAVASEKKCLLDLVELVGFDTEIDHRALQHYTVLQYVPEPETLHRGVRRLESGCFARIRADQLAPVITRYFVPRFAASPITNDNDQARYDEITAVLEDSVAKHMRADVTVGAFLSGGIDSTAIAALAIRHNPRLITFTTGFEREGFSEIDVAVASAEAIGARHIAKVVSADEFVAALPEIVWYLDEPVADPALVPLFFVAREARKHVKVVLSGEGADELFGGYTIYREPLSLRPFDYLPKPLRRSMGKVSKPLPEGMRGKSLLHRGSLTLEERYYGNARSFSGAQLREVLPGFRPDWTHTDVTAPVYAESAGWDPVARMQHIDLFTWLRGDILVKADKITMANSLELRVPFLDPEVFAVASRLPAGAKITRTTTKYALRRALEPIVPAHVLHRPKLGFPVPIRHWLRAGELLEWAYATVGSSQAGHLVDIAAVYRMLDEHRCGSSDHSRRLWTMLIFMLWHAIFVEHSVVPQISEPQYPVQL</sequence>
<dbReference type="EC" id="6.3.5.4"/>
<dbReference type="EMBL" id="AE000516">
    <property type="protein sequence ID" value="AAK46543.1"/>
    <property type="molecule type" value="Genomic_DNA"/>
</dbReference>
<dbReference type="PIR" id="B70785">
    <property type="entry name" value="B70785"/>
</dbReference>
<dbReference type="RefSeq" id="WP_003411413.1">
    <property type="nucleotide sequence ID" value="NZ_KK341227.1"/>
</dbReference>
<dbReference type="SMR" id="P9WN32"/>
<dbReference type="KEGG" id="mtc:MT2257"/>
<dbReference type="PATRIC" id="fig|83331.31.peg.2432"/>
<dbReference type="HOGENOM" id="CLU_014658_3_0_11"/>
<dbReference type="UniPathway" id="UPA00134">
    <property type="reaction ID" value="UER00195"/>
</dbReference>
<dbReference type="Proteomes" id="UP000001020">
    <property type="component" value="Chromosome"/>
</dbReference>
<dbReference type="GO" id="GO:0005829">
    <property type="term" value="C:cytosol"/>
    <property type="evidence" value="ECO:0007669"/>
    <property type="project" value="TreeGrafter"/>
</dbReference>
<dbReference type="GO" id="GO:0004066">
    <property type="term" value="F:asparagine synthase (glutamine-hydrolyzing) activity"/>
    <property type="evidence" value="ECO:0007669"/>
    <property type="project" value="UniProtKB-EC"/>
</dbReference>
<dbReference type="GO" id="GO:0005524">
    <property type="term" value="F:ATP binding"/>
    <property type="evidence" value="ECO:0007669"/>
    <property type="project" value="UniProtKB-KW"/>
</dbReference>
<dbReference type="GO" id="GO:0070981">
    <property type="term" value="P:L-asparagine biosynthetic process"/>
    <property type="evidence" value="ECO:0007669"/>
    <property type="project" value="UniProtKB-UniPathway"/>
</dbReference>
<dbReference type="CDD" id="cd01991">
    <property type="entry name" value="Asn_synthase_B_C"/>
    <property type="match status" value="1"/>
</dbReference>
<dbReference type="CDD" id="cd00712">
    <property type="entry name" value="AsnB"/>
    <property type="match status" value="1"/>
</dbReference>
<dbReference type="Gene3D" id="3.60.20.10">
    <property type="entry name" value="Glutamine Phosphoribosylpyrophosphate, subunit 1, domain 1"/>
    <property type="match status" value="1"/>
</dbReference>
<dbReference type="Gene3D" id="3.40.50.620">
    <property type="entry name" value="HUPs"/>
    <property type="match status" value="1"/>
</dbReference>
<dbReference type="InterPro" id="IPR006426">
    <property type="entry name" value="Asn_synth_AEB"/>
</dbReference>
<dbReference type="InterPro" id="IPR001962">
    <property type="entry name" value="Asn_synthase"/>
</dbReference>
<dbReference type="InterPro" id="IPR051786">
    <property type="entry name" value="ASN_synthetase/amidase"/>
</dbReference>
<dbReference type="InterPro" id="IPR033738">
    <property type="entry name" value="AsnB_N"/>
</dbReference>
<dbReference type="InterPro" id="IPR017932">
    <property type="entry name" value="GATase_2_dom"/>
</dbReference>
<dbReference type="InterPro" id="IPR029055">
    <property type="entry name" value="Ntn_hydrolases_N"/>
</dbReference>
<dbReference type="InterPro" id="IPR014729">
    <property type="entry name" value="Rossmann-like_a/b/a_fold"/>
</dbReference>
<dbReference type="NCBIfam" id="TIGR01536">
    <property type="entry name" value="asn_synth_AEB"/>
    <property type="match status" value="1"/>
</dbReference>
<dbReference type="PANTHER" id="PTHR43284:SF1">
    <property type="entry name" value="ASPARAGINE SYNTHETASE"/>
    <property type="match status" value="1"/>
</dbReference>
<dbReference type="PANTHER" id="PTHR43284">
    <property type="entry name" value="ASPARAGINE SYNTHETASE (GLUTAMINE-HYDROLYZING)"/>
    <property type="match status" value="1"/>
</dbReference>
<dbReference type="Pfam" id="PF00733">
    <property type="entry name" value="Asn_synthase"/>
    <property type="match status" value="1"/>
</dbReference>
<dbReference type="Pfam" id="PF13537">
    <property type="entry name" value="GATase_7"/>
    <property type="match status" value="1"/>
</dbReference>
<dbReference type="PIRSF" id="PIRSF001589">
    <property type="entry name" value="Asn_synthetase_glu-h"/>
    <property type="match status" value="1"/>
</dbReference>
<dbReference type="SUPFAM" id="SSF52402">
    <property type="entry name" value="Adenine nucleotide alpha hydrolases-like"/>
    <property type="match status" value="1"/>
</dbReference>
<dbReference type="SUPFAM" id="SSF56235">
    <property type="entry name" value="N-terminal nucleophile aminohydrolases (Ntn hydrolases)"/>
    <property type="match status" value="1"/>
</dbReference>
<dbReference type="PROSITE" id="PS51278">
    <property type="entry name" value="GATASE_TYPE_2"/>
    <property type="match status" value="1"/>
</dbReference>
<organism>
    <name type="scientific">Mycobacterium tuberculosis (strain CDC 1551 / Oshkosh)</name>
    <dbReference type="NCBI Taxonomy" id="83331"/>
    <lineage>
        <taxon>Bacteria</taxon>
        <taxon>Bacillati</taxon>
        <taxon>Actinomycetota</taxon>
        <taxon>Actinomycetes</taxon>
        <taxon>Mycobacteriales</taxon>
        <taxon>Mycobacteriaceae</taxon>
        <taxon>Mycobacterium</taxon>
        <taxon>Mycobacterium tuberculosis complex</taxon>
    </lineage>
</organism>
<accession>P9WN32</accession>
<accession>L0TAH2</accession>
<accession>P64247</accession>
<accession>Q10374</accession>
<keyword id="KW-0028">Amino-acid biosynthesis</keyword>
<keyword id="KW-0061">Asparagine biosynthesis</keyword>
<keyword id="KW-0067">ATP-binding</keyword>
<keyword id="KW-0315">Glutamine amidotransferase</keyword>
<keyword id="KW-0436">Ligase</keyword>
<keyword id="KW-0547">Nucleotide-binding</keyword>
<keyword id="KW-1185">Reference proteome</keyword>
<name>ASNH_MYCTO</name>
<proteinExistence type="inferred from homology"/>
<evidence type="ECO:0000250" key="1"/>
<evidence type="ECO:0000255" key="2">
    <source>
        <dbReference type="PROSITE-ProRule" id="PRU00609"/>
    </source>
</evidence>
<evidence type="ECO:0000305" key="3"/>
<feature type="initiator methionine" description="Removed" evidence="1">
    <location>
        <position position="1"/>
    </location>
</feature>
<feature type="chain" id="PRO_0000427197" description="Putative asparagine synthetase [glutamine-hydrolyzing]">
    <location>
        <begin position="2"/>
        <end position="652"/>
    </location>
</feature>
<feature type="domain" description="Glutamine amidotransferase type-2" evidence="2">
    <location>
        <begin position="2"/>
        <end position="231"/>
    </location>
</feature>
<feature type="active site" description="For GATase activity" evidence="1">
    <location>
        <position position="2"/>
    </location>
</feature>
<feature type="binding site" evidence="1">
    <location>
        <begin position="60"/>
        <end position="64"/>
    </location>
    <ligand>
        <name>L-glutamine</name>
        <dbReference type="ChEBI" id="CHEBI:58359"/>
    </ligand>
</feature>
<feature type="binding site" evidence="1">
    <location>
        <begin position="89"/>
        <end position="91"/>
    </location>
    <ligand>
        <name>L-glutamine</name>
        <dbReference type="ChEBI" id="CHEBI:58359"/>
    </ligand>
</feature>
<feature type="binding site" evidence="1">
    <location>
        <position position="115"/>
    </location>
    <ligand>
        <name>L-glutamine</name>
        <dbReference type="ChEBI" id="CHEBI:58359"/>
    </ligand>
</feature>
<feature type="binding site" evidence="1">
    <location>
        <begin position="382"/>
        <end position="383"/>
    </location>
    <ligand>
        <name>ATP</name>
        <dbReference type="ChEBI" id="CHEBI:30616"/>
    </ligand>
</feature>
<feature type="site" description="Important for beta-aspartyl-AMP intermediate formation" evidence="1">
    <location>
        <position position="384"/>
    </location>
</feature>
<protein>
    <recommendedName>
        <fullName>Putative asparagine synthetase [glutamine-hydrolyzing]</fullName>
        <ecNumber>6.3.5.4</ecNumber>
    </recommendedName>
</protein>
<reference key="1">
    <citation type="journal article" date="2002" name="J. Bacteriol.">
        <title>Whole-genome comparison of Mycobacterium tuberculosis clinical and laboratory strains.</title>
        <authorList>
            <person name="Fleischmann R.D."/>
            <person name="Alland D."/>
            <person name="Eisen J.A."/>
            <person name="Carpenter L."/>
            <person name="White O."/>
            <person name="Peterson J.D."/>
            <person name="DeBoy R.T."/>
            <person name="Dodson R.J."/>
            <person name="Gwinn M.L."/>
            <person name="Haft D.H."/>
            <person name="Hickey E.K."/>
            <person name="Kolonay J.F."/>
            <person name="Nelson W.C."/>
            <person name="Umayam L.A."/>
            <person name="Ermolaeva M.D."/>
            <person name="Salzberg S.L."/>
            <person name="Delcher A."/>
            <person name="Utterback T.R."/>
            <person name="Weidman J.F."/>
            <person name="Khouri H.M."/>
            <person name="Gill J."/>
            <person name="Mikula A."/>
            <person name="Bishai W."/>
            <person name="Jacobs W.R. Jr."/>
            <person name="Venter J.C."/>
            <person name="Fraser C.M."/>
        </authorList>
    </citation>
    <scope>NUCLEOTIDE SEQUENCE [LARGE SCALE GENOMIC DNA]</scope>
    <source>
        <strain>CDC 1551 / Oshkosh</strain>
    </source>
</reference>
<comment type="catalytic activity">
    <reaction>
        <text>L-aspartate + L-glutamine + ATP + H2O = L-asparagine + L-glutamate + AMP + diphosphate + H(+)</text>
        <dbReference type="Rhea" id="RHEA:12228"/>
        <dbReference type="ChEBI" id="CHEBI:15377"/>
        <dbReference type="ChEBI" id="CHEBI:15378"/>
        <dbReference type="ChEBI" id="CHEBI:29985"/>
        <dbReference type="ChEBI" id="CHEBI:29991"/>
        <dbReference type="ChEBI" id="CHEBI:30616"/>
        <dbReference type="ChEBI" id="CHEBI:33019"/>
        <dbReference type="ChEBI" id="CHEBI:58048"/>
        <dbReference type="ChEBI" id="CHEBI:58359"/>
        <dbReference type="ChEBI" id="CHEBI:456215"/>
        <dbReference type="EC" id="6.3.5.4"/>
    </reaction>
</comment>
<comment type="pathway">
    <text>Amino-acid biosynthesis; L-asparagine biosynthesis; L-asparagine from L-aspartate (L-Gln route): step 1/1.</text>
</comment>
<comment type="similarity">
    <text evidence="3">Belongs to the asparagine synthetase family.</text>
</comment>
<gene>
    <name type="primary">asnB</name>
    <name type="ordered locus">MT2257</name>
</gene>